<name>SMO22_ARATH</name>
<reference key="1">
    <citation type="journal article" date="2001" name="FEBS Lett.">
        <title>Functional identification of sterol-4alpha-methyl oxidase cDNAs from Arabidopsis thaliana by complementation of a yeast erg25 mutant lacking sterol-4alpha-methyl oxidation.</title>
        <authorList>
            <person name="Darnet S."/>
            <person name="Bard M."/>
            <person name="Rahier A."/>
        </authorList>
    </citation>
    <scope>NUCLEOTIDE SEQUENCE [MRNA] (ISOFORM 1)</scope>
    <scope>FUNCTION</scope>
    <scope>CATALYTIC ACTIVITY</scope>
    <source>
        <strain>cv. Columbia</strain>
        <tissue>Silique</tissue>
    </source>
</reference>
<reference key="2">
    <citation type="journal article" date="2004" name="Biochem. J.">
        <title>Plant sterol biosynthesis: identification of two distinct families of sterol 4alpha-methyl oxidases.</title>
        <authorList>
            <person name="Darnet S."/>
            <person name="Rahier A."/>
        </authorList>
    </citation>
    <scope>NUCLEOTIDE SEQUENCE [MRNA] (ISOFORM 1)</scope>
    <scope>GENE FAMILY</scope>
    <scope>NOMENCLATURE</scope>
    <source>
        <strain>cv. Columbia</strain>
        <tissue>Silique</tissue>
    </source>
</reference>
<reference key="3">
    <citation type="journal article" date="2000" name="Nature">
        <title>Sequence and analysis of chromosome 1 of the plant Arabidopsis thaliana.</title>
        <authorList>
            <person name="Theologis A."/>
            <person name="Ecker J.R."/>
            <person name="Palm C.J."/>
            <person name="Federspiel N.A."/>
            <person name="Kaul S."/>
            <person name="White O."/>
            <person name="Alonso J."/>
            <person name="Altafi H."/>
            <person name="Araujo R."/>
            <person name="Bowman C.L."/>
            <person name="Brooks S.Y."/>
            <person name="Buehler E."/>
            <person name="Chan A."/>
            <person name="Chao Q."/>
            <person name="Chen H."/>
            <person name="Cheuk R.F."/>
            <person name="Chin C.W."/>
            <person name="Chung M.K."/>
            <person name="Conn L."/>
            <person name="Conway A.B."/>
            <person name="Conway A.R."/>
            <person name="Creasy T.H."/>
            <person name="Dewar K."/>
            <person name="Dunn P."/>
            <person name="Etgu P."/>
            <person name="Feldblyum T.V."/>
            <person name="Feng J.-D."/>
            <person name="Fong B."/>
            <person name="Fujii C.Y."/>
            <person name="Gill J.E."/>
            <person name="Goldsmith A.D."/>
            <person name="Haas B."/>
            <person name="Hansen N.F."/>
            <person name="Hughes B."/>
            <person name="Huizar L."/>
            <person name="Hunter J.L."/>
            <person name="Jenkins J."/>
            <person name="Johnson-Hopson C."/>
            <person name="Khan S."/>
            <person name="Khaykin E."/>
            <person name="Kim C.J."/>
            <person name="Koo H.L."/>
            <person name="Kremenetskaia I."/>
            <person name="Kurtz D.B."/>
            <person name="Kwan A."/>
            <person name="Lam B."/>
            <person name="Langin-Hooper S."/>
            <person name="Lee A."/>
            <person name="Lee J.M."/>
            <person name="Lenz C.A."/>
            <person name="Li J.H."/>
            <person name="Li Y.-P."/>
            <person name="Lin X."/>
            <person name="Liu S.X."/>
            <person name="Liu Z.A."/>
            <person name="Luros J.S."/>
            <person name="Maiti R."/>
            <person name="Marziali A."/>
            <person name="Militscher J."/>
            <person name="Miranda M."/>
            <person name="Nguyen M."/>
            <person name="Nierman W.C."/>
            <person name="Osborne B.I."/>
            <person name="Pai G."/>
            <person name="Peterson J."/>
            <person name="Pham P.K."/>
            <person name="Rizzo M."/>
            <person name="Rooney T."/>
            <person name="Rowley D."/>
            <person name="Sakano H."/>
            <person name="Salzberg S.L."/>
            <person name="Schwartz J.R."/>
            <person name="Shinn P."/>
            <person name="Southwick A.M."/>
            <person name="Sun H."/>
            <person name="Tallon L.J."/>
            <person name="Tambunga G."/>
            <person name="Toriumi M.J."/>
            <person name="Town C.D."/>
            <person name="Utterback T."/>
            <person name="Van Aken S."/>
            <person name="Vaysberg M."/>
            <person name="Vysotskaia V.S."/>
            <person name="Walker M."/>
            <person name="Wu D."/>
            <person name="Yu G."/>
            <person name="Fraser C.M."/>
            <person name="Venter J.C."/>
            <person name="Davis R.W."/>
        </authorList>
    </citation>
    <scope>NUCLEOTIDE SEQUENCE [LARGE SCALE GENOMIC DNA]</scope>
    <source>
        <strain>cv. Columbia</strain>
    </source>
</reference>
<reference key="4">
    <citation type="journal article" date="2017" name="Plant J.">
        <title>Araport11: a complete reannotation of the Arabidopsis thaliana reference genome.</title>
        <authorList>
            <person name="Cheng C.Y."/>
            <person name="Krishnakumar V."/>
            <person name="Chan A.P."/>
            <person name="Thibaud-Nissen F."/>
            <person name="Schobel S."/>
            <person name="Town C.D."/>
        </authorList>
    </citation>
    <scope>GENOME REANNOTATION</scope>
    <source>
        <strain>cv. Columbia</strain>
    </source>
</reference>
<reference key="5">
    <citation type="submission" date="2002-03" db="EMBL/GenBank/DDBJ databases">
        <title>Full-length cDNA from Arabidopsis thaliana.</title>
        <authorList>
            <person name="Brover V.V."/>
            <person name="Troukhan M.E."/>
            <person name="Alexandrov N.A."/>
            <person name="Lu Y.-P."/>
            <person name="Flavell R.B."/>
            <person name="Feldmann K.A."/>
        </authorList>
    </citation>
    <scope>NUCLEOTIDE SEQUENCE [LARGE SCALE MRNA] (ISOFORM 1)</scope>
</reference>
<reference key="6">
    <citation type="submission" date="2008-10" db="EMBL/GenBank/DDBJ databases">
        <title>Arabidopsis ORF clones.</title>
        <authorList>
            <person name="de los Reyes C."/>
            <person name="Quan R."/>
            <person name="Chen H."/>
            <person name="Bautista V."/>
            <person name="Kim C.J."/>
            <person name="Ecker J.R."/>
        </authorList>
    </citation>
    <scope>NUCLEOTIDE SEQUENCE [LARGE SCALE MRNA] (ISOFORM 1)</scope>
</reference>
<reference key="7">
    <citation type="journal article" date="2009" name="DNA Res.">
        <title>Analysis of multiple occurrences of alternative splicing events in Arabidopsis thaliana using novel sequenced full-length cDNAs.</title>
        <authorList>
            <person name="Iida K."/>
            <person name="Fukami-Kobayashi K."/>
            <person name="Toyoda A."/>
            <person name="Sakaki Y."/>
            <person name="Kobayashi M."/>
            <person name="Seki M."/>
            <person name="Shinozaki K."/>
        </authorList>
    </citation>
    <scope>NUCLEOTIDE SEQUENCE [LARGE SCALE MRNA] (ISOFORM 2)</scope>
    <source>
        <strain>cv. Columbia</strain>
        <tissue>Rosette leaf</tissue>
    </source>
</reference>
<reference key="8">
    <citation type="journal article" date="2016" name="Plant Physiol.">
        <title>Sterol methyl oxidases affect embryo development via auxin-associated mechanisms.</title>
        <authorList>
            <person name="Zhang X."/>
            <person name="Sun S."/>
            <person name="Nie X."/>
            <person name="Boutte Y."/>
            <person name="Grison M."/>
            <person name="Li P."/>
            <person name="Kuang S."/>
            <person name="Men S."/>
        </authorList>
    </citation>
    <scope>FUNCTION</scope>
    <scope>DISRUPTION PHENOTYPE</scope>
    <scope>SUBCELLULAR LOCATION</scope>
    <scope>TISSUE SPECIFICITY</scope>
    <scope>DEVELOPMENTAL STAGE</scope>
    <source>
        <strain>cv. Columbia</strain>
    </source>
</reference>
<evidence type="ECO:0000250" key="1">
    <source>
        <dbReference type="UniProtKB" id="P53045"/>
    </source>
</evidence>
<evidence type="ECO:0000255" key="2"/>
<evidence type="ECO:0000269" key="3">
    <source>
    </source>
</evidence>
<evidence type="ECO:0000269" key="4">
    <source>
    </source>
</evidence>
<evidence type="ECO:0000303" key="5">
    <source>
    </source>
</evidence>
<evidence type="ECO:0000303" key="6">
    <source>
    </source>
</evidence>
<evidence type="ECO:0000303" key="7">
    <source>
    </source>
</evidence>
<evidence type="ECO:0000305" key="8"/>
<evidence type="ECO:0000312" key="9">
    <source>
        <dbReference type="Araport" id="AT1G07420"/>
    </source>
</evidence>
<evidence type="ECO:0000312" key="10">
    <source>
        <dbReference type="EMBL" id="AAF79571.1"/>
    </source>
</evidence>
<gene>
    <name evidence="6" type="primary">SMO2-2</name>
    <name evidence="5 6" type="synonym">SMO1</name>
    <name evidence="9" type="ordered locus">At1g07420</name>
    <name evidence="10" type="ORF">F22G5.23</name>
</gene>
<comment type="function">
    <text evidence="3 4">Non-heme iron oxygenase involved in sterols biosynthesis by catalyzing the removal of the second methyl group at the C-4 position (PubMed:11707264). 24-ethylidenelophenol and 24-ethyllophenol are the preferred substrates (PubMed:11707264). Together with SMO2-1, required during embryogenesis, probably by maintaining sterols and auxin homeostasis (PubMed:27006488).</text>
</comment>
<comment type="catalytic activity">
    <reaction evidence="3">
        <text>4,4-dimethyl-5alpha-cholest-7-en-3beta-ol + 6 Fe(II)-[cytochrome b5] + 3 O2 + 5 H(+) = 4alpha-carboxy-4beta-methyl-5alpha-cholest-7-ene-3beta-ol + 6 Fe(III)-[cytochrome b5] + 4 H2O</text>
        <dbReference type="Rhea" id="RHEA:55220"/>
        <dbReference type="Rhea" id="RHEA-COMP:10438"/>
        <dbReference type="Rhea" id="RHEA-COMP:10439"/>
        <dbReference type="ChEBI" id="CHEBI:15377"/>
        <dbReference type="ChEBI" id="CHEBI:15378"/>
        <dbReference type="ChEBI" id="CHEBI:15379"/>
        <dbReference type="ChEBI" id="CHEBI:16455"/>
        <dbReference type="ChEBI" id="CHEBI:29033"/>
        <dbReference type="ChEBI" id="CHEBI:29034"/>
        <dbReference type="ChEBI" id="CHEBI:58387"/>
        <dbReference type="EC" id="1.14.18.9"/>
    </reaction>
</comment>
<comment type="catalytic activity">
    <reaction evidence="3">
        <text>24-methylidenelophenol + 6 Fe(II)-[cytochrome b5] + 3 O2 + 5 H(+) = 4alpha-carboxy-ergosta-7,24(24(1))-dien-3beta-ol + 6 Fe(III)-[cytochrome b5] + 4 H2O</text>
        <dbReference type="Rhea" id="RHEA:58868"/>
        <dbReference type="Rhea" id="RHEA-COMP:10438"/>
        <dbReference type="Rhea" id="RHEA-COMP:10439"/>
        <dbReference type="ChEBI" id="CHEBI:15377"/>
        <dbReference type="ChEBI" id="CHEBI:15378"/>
        <dbReference type="ChEBI" id="CHEBI:15379"/>
        <dbReference type="ChEBI" id="CHEBI:29033"/>
        <dbReference type="ChEBI" id="CHEBI:29034"/>
        <dbReference type="ChEBI" id="CHEBI:29107"/>
        <dbReference type="ChEBI" id="CHEBI:142850"/>
        <dbReference type="EC" id="1.14.18.11"/>
    </reaction>
</comment>
<comment type="cofactor">
    <cofactor evidence="1">
        <name>Fe cation</name>
        <dbReference type="ChEBI" id="CHEBI:24875"/>
    </cofactor>
</comment>
<comment type="subcellular location">
    <subcellularLocation>
        <location evidence="4">Endoplasmic reticulum membrane</location>
        <topology evidence="2">Multi-pass membrane protein</topology>
    </subcellularLocation>
</comment>
<comment type="alternative products">
    <event type="alternative splicing"/>
    <isoform>
        <id>Q8VWZ8-1</id>
        <name>1</name>
        <sequence type="displayed"/>
    </isoform>
    <isoform>
        <id>Q8VWZ8-2</id>
        <name>2</name>
        <sequence type="described" ref="VSP_041865"/>
    </isoform>
</comment>
<comment type="tissue specificity">
    <text evidence="4">Expressed in shoots, roots, siliques and flowers, and, slightly, in developing seeds.</text>
</comment>
<comment type="developmental stage">
    <text evidence="4">In shoots, restricted to the apical meristem (SAM) (PubMed:27006488). In roots, detected only in adventitious root primordia, lateral root primordia, and the root tip meristem (PubMed:27006488). In flowers, expressed in vascular tissues of sepals and petals as well as in stamen filaments and pollen (PubMed:27006488). In young siliques, confined to the style and silique funiculus (PubMed:27006488). In mature siliques, restricted to the abscission zone (PubMed:27006488). During embroygenesis, first expressed at very low levels in seeds at the early developmental stages; accumulates slightly in the late stages (PubMed:27006488).</text>
</comment>
<comment type="domain">
    <text evidence="1">The histidine box domains may contain the active site and/or be involved in metal ion binding.</text>
</comment>
<comment type="disruption phenotype">
    <text evidence="4">No obvious phenotype (PubMed:27006488). The smo2-1 smo2-2 double mutant accumulates the 4alpha-methylsterols 24-ethylidene lophenol and 24-ethyl lophenol, and is embryonic lethal, arrested in early stages with an altered endosperm development, probably due to disturbed auxin flux and responses (PubMed:27006488).</text>
</comment>
<comment type="miscellaneous">
    <text evidence="8">Requires a membrane-bound cytochrome b5 as an obligatory electron carrier from NAD(P)H to SMO.</text>
</comment>
<comment type="similarity">
    <text evidence="8">Belongs to the sterol desaturase family.</text>
</comment>
<comment type="sequence caution" evidence="8">
    <conflict type="erroneous gene model prediction">
        <sequence resource="EMBL-CDS" id="AAF79571"/>
    </conflict>
</comment>
<feature type="chain" id="PRO_0000413165" description="Methylsterol monooxygenase 2-2">
    <location>
        <begin position="1"/>
        <end position="266"/>
    </location>
</feature>
<feature type="transmembrane region" description="Helical" evidence="2">
    <location>
        <begin position="24"/>
        <end position="44"/>
    </location>
</feature>
<feature type="transmembrane region" description="Helical" evidence="2">
    <location>
        <begin position="71"/>
        <end position="91"/>
    </location>
</feature>
<feature type="transmembrane region" description="Helical" evidence="2">
    <location>
        <begin position="107"/>
        <end position="127"/>
    </location>
</feature>
<feature type="transmembrane region" description="Helical" evidence="2">
    <location>
        <begin position="162"/>
        <end position="182"/>
    </location>
</feature>
<feature type="domain" description="Fatty acid hydroxylase" evidence="2">
    <location>
        <begin position="113"/>
        <end position="247"/>
    </location>
</feature>
<feature type="short sequence motif" description="Histidine box-1" evidence="1">
    <location>
        <begin position="127"/>
        <end position="131"/>
    </location>
</feature>
<feature type="short sequence motif" description="Histidine box-2" evidence="1">
    <location>
        <begin position="140"/>
        <end position="144"/>
    </location>
</feature>
<feature type="short sequence motif" description="Histidine box-3" evidence="1">
    <location>
        <begin position="219"/>
        <end position="225"/>
    </location>
</feature>
<feature type="splice variant" id="VSP_041865" description="In isoform 2." evidence="7">
    <original>MASFVESGWQYLVTHFSDFQLACIGSFLLHESVFFLSGLPFIFLERQGFLSKYKI</original>
    <variation>MLLLPFMVNTYFSFVPM</variation>
    <location>
        <begin position="1"/>
        <end position="55"/>
    </location>
</feature>
<feature type="sequence conflict" description="In Ref. 5; AAM64821." evidence="8" ref="5">
    <original>L</original>
    <variation>F</variation>
    <location>
        <position position="29"/>
    </location>
</feature>
<protein>
    <recommendedName>
        <fullName evidence="6">Methylsterol monooxygenase 2-2</fullName>
        <ecNumber evidence="3">1.14.18.11</ecNumber>
        <ecNumber evidence="3">1.14.18.9</ecNumber>
    </recommendedName>
    <alternativeName>
        <fullName evidence="5 6">Sterol 4-alpha-methyl-oxidase 1</fullName>
        <shortName evidence="5 6">AtSMO1</shortName>
    </alternativeName>
    <alternativeName>
        <fullName evidence="6">Sterol 4-alpha-methyl-oxidase 2-2</fullName>
    </alternativeName>
</protein>
<organism>
    <name type="scientific">Arabidopsis thaliana</name>
    <name type="common">Mouse-ear cress</name>
    <dbReference type="NCBI Taxonomy" id="3702"/>
    <lineage>
        <taxon>Eukaryota</taxon>
        <taxon>Viridiplantae</taxon>
        <taxon>Streptophyta</taxon>
        <taxon>Embryophyta</taxon>
        <taxon>Tracheophyta</taxon>
        <taxon>Spermatophyta</taxon>
        <taxon>Magnoliopsida</taxon>
        <taxon>eudicotyledons</taxon>
        <taxon>Gunneridae</taxon>
        <taxon>Pentapetalae</taxon>
        <taxon>rosids</taxon>
        <taxon>malvids</taxon>
        <taxon>Brassicales</taxon>
        <taxon>Brassicaceae</taxon>
        <taxon>Camelineae</taxon>
        <taxon>Arabidopsis</taxon>
    </lineage>
</organism>
<proteinExistence type="evidence at protein level"/>
<sequence>MASFVESGWQYLVTHFSDFQLACIGSFLLHESVFFLSGLPFIFLERQGFLSKYKIQTKNNTPAAQGKCITRLLLYHFSVNLPLMLASYPVFRAMGMRSSFPLPSWKEVSAQILFYFIIEDFVFYWGHRILHSKWLYKNVHSVHHEYATPFGLTSEYAHPAEILFLGFATIVGPALTGPHLITLWLWMVLRVLETVEAHCGYHFPWSLSNFLPLYGGADFHDYHHRLLYTKSGNYSSTFVYMDWIFGTDKGYRRLKTLKENGDMKQT</sequence>
<accession>Q8VWZ8</accession>
<accession>B9DFL5</accession>
<accession>Q8LBE1</accession>
<accession>Q9LNW2</accession>
<dbReference type="EC" id="1.14.18.11" evidence="3"/>
<dbReference type="EC" id="1.14.18.9" evidence="3"/>
<dbReference type="EMBL" id="AF346734">
    <property type="protein sequence ID" value="AAL32303.1"/>
    <property type="molecule type" value="mRNA"/>
</dbReference>
<dbReference type="EMBL" id="AC022464">
    <property type="protein sequence ID" value="AAF79571.1"/>
    <property type="status" value="ALT_SEQ"/>
    <property type="molecule type" value="Genomic_DNA"/>
</dbReference>
<dbReference type="EMBL" id="CP002684">
    <property type="protein sequence ID" value="AEE28122.1"/>
    <property type="molecule type" value="Genomic_DNA"/>
</dbReference>
<dbReference type="EMBL" id="CP002684">
    <property type="protein sequence ID" value="AEE28123.1"/>
    <property type="molecule type" value="Genomic_DNA"/>
</dbReference>
<dbReference type="EMBL" id="AY087267">
    <property type="protein sequence ID" value="AAM64821.1"/>
    <property type="molecule type" value="mRNA"/>
</dbReference>
<dbReference type="EMBL" id="BT044610">
    <property type="protein sequence ID" value="ACI31310.1"/>
    <property type="molecule type" value="mRNA"/>
</dbReference>
<dbReference type="EMBL" id="AK316820">
    <property type="protein sequence ID" value="BAH19532.1"/>
    <property type="molecule type" value="mRNA"/>
</dbReference>
<dbReference type="RefSeq" id="NP_563789.1">
    <molecule id="Q8VWZ8-1"/>
    <property type="nucleotide sequence ID" value="NM_100616.3"/>
</dbReference>
<dbReference type="RefSeq" id="NP_973777.1">
    <molecule id="Q8VWZ8-2"/>
    <property type="nucleotide sequence ID" value="NM_202048.2"/>
</dbReference>
<dbReference type="FunCoup" id="Q8VWZ8">
    <property type="interactions" value="1084"/>
</dbReference>
<dbReference type="STRING" id="3702.Q8VWZ8"/>
<dbReference type="PaxDb" id="3702-AT1G07420.1"/>
<dbReference type="ProteomicsDB" id="228446">
    <molecule id="Q8VWZ8-1"/>
</dbReference>
<dbReference type="DNASU" id="837254"/>
<dbReference type="EnsemblPlants" id="AT1G07420.1">
    <molecule id="Q8VWZ8-1"/>
    <property type="protein sequence ID" value="AT1G07420.1"/>
    <property type="gene ID" value="AT1G07420"/>
</dbReference>
<dbReference type="EnsemblPlants" id="AT1G07420.2">
    <molecule id="Q8VWZ8-2"/>
    <property type="protein sequence ID" value="AT1G07420.2"/>
    <property type="gene ID" value="AT1G07420"/>
</dbReference>
<dbReference type="GeneID" id="837254"/>
<dbReference type="Gramene" id="AT1G07420.1">
    <molecule id="Q8VWZ8-1"/>
    <property type="protein sequence ID" value="AT1G07420.1"/>
    <property type="gene ID" value="AT1G07420"/>
</dbReference>
<dbReference type="Gramene" id="AT1G07420.2">
    <molecule id="Q8VWZ8-2"/>
    <property type="protein sequence ID" value="AT1G07420.2"/>
    <property type="gene ID" value="AT1G07420"/>
</dbReference>
<dbReference type="KEGG" id="ath:AT1G07420"/>
<dbReference type="Araport" id="AT1G07420"/>
<dbReference type="TAIR" id="AT1G07420">
    <property type="gene designation" value="SMO2-1"/>
</dbReference>
<dbReference type="eggNOG" id="KOG0873">
    <property type="taxonomic scope" value="Eukaryota"/>
</dbReference>
<dbReference type="InParanoid" id="Q8VWZ8"/>
<dbReference type="OMA" id="IVHEFIY"/>
<dbReference type="OrthoDB" id="1658724at2759"/>
<dbReference type="PhylomeDB" id="Q8VWZ8"/>
<dbReference type="BioCyc" id="ARA:AT1G07420-MONOMER"/>
<dbReference type="BioCyc" id="MetaCyc:AT1G07420-MONOMER"/>
<dbReference type="BRENDA" id="1.14.18.10">
    <property type="organism ID" value="399"/>
</dbReference>
<dbReference type="BRENDA" id="1.14.18.11">
    <property type="organism ID" value="399"/>
</dbReference>
<dbReference type="PRO" id="PR:Q8VWZ8"/>
<dbReference type="Proteomes" id="UP000006548">
    <property type="component" value="Chromosome 1"/>
</dbReference>
<dbReference type="ExpressionAtlas" id="Q8VWZ8">
    <property type="expression patterns" value="baseline and differential"/>
</dbReference>
<dbReference type="GO" id="GO:0009941">
    <property type="term" value="C:chloroplast envelope"/>
    <property type="evidence" value="ECO:0007005"/>
    <property type="project" value="TAIR"/>
</dbReference>
<dbReference type="GO" id="GO:0005783">
    <property type="term" value="C:endoplasmic reticulum"/>
    <property type="evidence" value="ECO:0000314"/>
    <property type="project" value="TAIR"/>
</dbReference>
<dbReference type="GO" id="GO:0005789">
    <property type="term" value="C:endoplasmic reticulum membrane"/>
    <property type="evidence" value="ECO:0000314"/>
    <property type="project" value="UniProtKB"/>
</dbReference>
<dbReference type="GO" id="GO:0000254">
    <property type="term" value="F:C-4 methylsterol oxidase activity"/>
    <property type="evidence" value="ECO:0000316"/>
    <property type="project" value="TAIR"/>
</dbReference>
<dbReference type="GO" id="GO:0005506">
    <property type="term" value="F:iron ion binding"/>
    <property type="evidence" value="ECO:0007669"/>
    <property type="project" value="InterPro"/>
</dbReference>
<dbReference type="GO" id="GO:0080065">
    <property type="term" value="P:4-alpha-methyl-delta7-sterol oxidation"/>
    <property type="evidence" value="ECO:0000316"/>
    <property type="project" value="TAIR"/>
</dbReference>
<dbReference type="GO" id="GO:0009793">
    <property type="term" value="P:embryo development ending in seed dormancy"/>
    <property type="evidence" value="ECO:0000316"/>
    <property type="project" value="TAIR"/>
</dbReference>
<dbReference type="GO" id="GO:0016126">
    <property type="term" value="P:sterol biosynthetic process"/>
    <property type="evidence" value="ECO:0007669"/>
    <property type="project" value="UniProtKB-KW"/>
</dbReference>
<dbReference type="InterPro" id="IPR006694">
    <property type="entry name" value="Fatty_acid_hydroxylase"/>
</dbReference>
<dbReference type="InterPro" id="IPR050307">
    <property type="entry name" value="Sterol_Desaturase_Related"/>
</dbReference>
<dbReference type="PANTHER" id="PTHR11863">
    <property type="entry name" value="STEROL DESATURASE"/>
    <property type="match status" value="1"/>
</dbReference>
<dbReference type="Pfam" id="PF04116">
    <property type="entry name" value="FA_hydroxylase"/>
    <property type="match status" value="1"/>
</dbReference>
<keyword id="KW-0025">Alternative splicing</keyword>
<keyword id="KW-0256">Endoplasmic reticulum</keyword>
<keyword id="KW-0408">Iron</keyword>
<keyword id="KW-0444">Lipid biosynthesis</keyword>
<keyword id="KW-0443">Lipid metabolism</keyword>
<keyword id="KW-0472">Membrane</keyword>
<keyword id="KW-0503">Monooxygenase</keyword>
<keyword id="KW-0560">Oxidoreductase</keyword>
<keyword id="KW-1185">Reference proteome</keyword>
<keyword id="KW-0752">Steroid biosynthesis</keyword>
<keyword id="KW-0753">Steroid metabolism</keyword>
<keyword id="KW-0756">Sterol biosynthesis</keyword>
<keyword id="KW-1207">Sterol metabolism</keyword>
<keyword id="KW-0812">Transmembrane</keyword>
<keyword id="KW-1133">Transmembrane helix</keyword>